<accession>B4EVZ5</accession>
<protein>
    <recommendedName>
        <fullName evidence="1">Ion-translocating oxidoreductase complex subunit A</fullName>
        <ecNumber evidence="1">7.-.-.-</ecNumber>
    </recommendedName>
    <alternativeName>
        <fullName evidence="1">Rnf electron transport complex subunit A</fullName>
    </alternativeName>
</protein>
<reference key="1">
    <citation type="journal article" date="2008" name="J. Bacteriol.">
        <title>Complete genome sequence of uropathogenic Proteus mirabilis, a master of both adherence and motility.</title>
        <authorList>
            <person name="Pearson M.M."/>
            <person name="Sebaihia M."/>
            <person name="Churcher C."/>
            <person name="Quail M.A."/>
            <person name="Seshasayee A.S."/>
            <person name="Luscombe N.M."/>
            <person name="Abdellah Z."/>
            <person name="Arrosmith C."/>
            <person name="Atkin B."/>
            <person name="Chillingworth T."/>
            <person name="Hauser H."/>
            <person name="Jagels K."/>
            <person name="Moule S."/>
            <person name="Mungall K."/>
            <person name="Norbertczak H."/>
            <person name="Rabbinowitsch E."/>
            <person name="Walker D."/>
            <person name="Whithead S."/>
            <person name="Thomson N.R."/>
            <person name="Rather P.N."/>
            <person name="Parkhill J."/>
            <person name="Mobley H.L.T."/>
        </authorList>
    </citation>
    <scope>NUCLEOTIDE SEQUENCE [LARGE SCALE GENOMIC DNA]</scope>
    <source>
        <strain>HI4320</strain>
    </source>
</reference>
<proteinExistence type="inferred from homology"/>
<organism>
    <name type="scientific">Proteus mirabilis (strain HI4320)</name>
    <dbReference type="NCBI Taxonomy" id="529507"/>
    <lineage>
        <taxon>Bacteria</taxon>
        <taxon>Pseudomonadati</taxon>
        <taxon>Pseudomonadota</taxon>
        <taxon>Gammaproteobacteria</taxon>
        <taxon>Enterobacterales</taxon>
        <taxon>Morganellaceae</taxon>
        <taxon>Proteus</taxon>
    </lineage>
</organism>
<gene>
    <name evidence="1" type="primary">rnfA</name>
    <name type="ordered locus">PMI1304</name>
</gene>
<comment type="function">
    <text evidence="1">Part of a membrane-bound complex that couples electron transfer with translocation of ions across the membrane.</text>
</comment>
<comment type="subunit">
    <text evidence="1">The complex is composed of six subunits: RnfA, RnfB, RnfC, RnfD, RnfE and RnfG.</text>
</comment>
<comment type="subcellular location">
    <subcellularLocation>
        <location evidence="1">Cell inner membrane</location>
        <topology evidence="1">Multi-pass membrane protein</topology>
    </subcellularLocation>
</comment>
<comment type="similarity">
    <text evidence="1">Belongs to the NqrDE/RnfAE family.</text>
</comment>
<name>RNFA_PROMH</name>
<feature type="chain" id="PRO_1000191729" description="Ion-translocating oxidoreductase complex subunit A">
    <location>
        <begin position="1"/>
        <end position="193"/>
    </location>
</feature>
<feature type="transmembrane region" description="Helical" evidence="1">
    <location>
        <begin position="5"/>
        <end position="25"/>
    </location>
</feature>
<feature type="transmembrane region" description="Helical" evidence="1">
    <location>
        <begin position="39"/>
        <end position="59"/>
    </location>
</feature>
<feature type="transmembrane region" description="Helical" evidence="1">
    <location>
        <begin position="62"/>
        <end position="82"/>
    </location>
</feature>
<feature type="transmembrane region" description="Helical" evidence="1">
    <location>
        <begin position="102"/>
        <end position="122"/>
    </location>
</feature>
<feature type="transmembrane region" description="Helical" evidence="1">
    <location>
        <begin position="134"/>
        <end position="154"/>
    </location>
</feature>
<feature type="transmembrane region" description="Helical" evidence="1">
    <location>
        <begin position="171"/>
        <end position="191"/>
    </location>
</feature>
<evidence type="ECO:0000255" key="1">
    <source>
        <dbReference type="HAMAP-Rule" id="MF_00459"/>
    </source>
</evidence>
<dbReference type="EC" id="7.-.-.-" evidence="1"/>
<dbReference type="EMBL" id="AM942759">
    <property type="protein sequence ID" value="CAR42770.1"/>
    <property type="molecule type" value="Genomic_DNA"/>
</dbReference>
<dbReference type="SMR" id="B4EVZ5"/>
<dbReference type="EnsemblBacteria" id="CAR42770">
    <property type="protein sequence ID" value="CAR42770"/>
    <property type="gene ID" value="PMI1304"/>
</dbReference>
<dbReference type="GeneID" id="6800374"/>
<dbReference type="KEGG" id="pmr:PMI1304"/>
<dbReference type="eggNOG" id="COG4657">
    <property type="taxonomic scope" value="Bacteria"/>
</dbReference>
<dbReference type="HOGENOM" id="CLU_095255_1_0_6"/>
<dbReference type="Proteomes" id="UP000008319">
    <property type="component" value="Chromosome"/>
</dbReference>
<dbReference type="GO" id="GO:0005886">
    <property type="term" value="C:plasma membrane"/>
    <property type="evidence" value="ECO:0007669"/>
    <property type="project" value="UniProtKB-SubCell"/>
</dbReference>
<dbReference type="GO" id="GO:0022900">
    <property type="term" value="P:electron transport chain"/>
    <property type="evidence" value="ECO:0007669"/>
    <property type="project" value="UniProtKB-UniRule"/>
</dbReference>
<dbReference type="HAMAP" id="MF_00459">
    <property type="entry name" value="RsxA_RnfA"/>
    <property type="match status" value="1"/>
</dbReference>
<dbReference type="InterPro" id="IPR011293">
    <property type="entry name" value="Ion_transpt_RnfA/RsxA"/>
</dbReference>
<dbReference type="InterPro" id="IPR003667">
    <property type="entry name" value="NqrDE/RnfAE"/>
</dbReference>
<dbReference type="InterPro" id="IPR050133">
    <property type="entry name" value="NqrDE/RnfAE_oxidrdctase"/>
</dbReference>
<dbReference type="NCBIfam" id="NF003481">
    <property type="entry name" value="PRK05151.1"/>
    <property type="match status" value="1"/>
</dbReference>
<dbReference type="NCBIfam" id="TIGR01943">
    <property type="entry name" value="rnfA"/>
    <property type="match status" value="1"/>
</dbReference>
<dbReference type="PANTHER" id="PTHR30335">
    <property type="entry name" value="INTEGRAL MEMBRANE PROTEIN OF SOXR-REDUCING COMPLEX"/>
    <property type="match status" value="1"/>
</dbReference>
<dbReference type="PANTHER" id="PTHR30335:SF0">
    <property type="entry name" value="ION-TRANSLOCATING OXIDOREDUCTASE COMPLEX SUBUNIT A"/>
    <property type="match status" value="1"/>
</dbReference>
<dbReference type="Pfam" id="PF02508">
    <property type="entry name" value="Rnf-Nqr"/>
    <property type="match status" value="1"/>
</dbReference>
<dbReference type="PIRSF" id="PIRSF006102">
    <property type="entry name" value="NQR_DE"/>
    <property type="match status" value="1"/>
</dbReference>
<sequence>MTDYLLLFVGTVLVNNFVLVKFLGLCPFMGVSKKLETAIGMGFATTFVMTIASISSWLMDTFILVPLDLLYLRTLSFILVIAVVVQFTEMVVRKTSPTLYRLLGIFLPLITTNCAVLGVALLNINQSHTFMQSAVYGFGAAVGFSLVMVLFAAIRERLAVANIPAPFKGSSIGLITAGLMSLAFMGFSGLVKL</sequence>
<keyword id="KW-0997">Cell inner membrane</keyword>
<keyword id="KW-1003">Cell membrane</keyword>
<keyword id="KW-0249">Electron transport</keyword>
<keyword id="KW-0472">Membrane</keyword>
<keyword id="KW-1185">Reference proteome</keyword>
<keyword id="KW-1278">Translocase</keyword>
<keyword id="KW-0812">Transmembrane</keyword>
<keyword id="KW-1133">Transmembrane helix</keyword>
<keyword id="KW-0813">Transport</keyword>